<name>GMHA_HELPH</name>
<feature type="chain" id="PRO_1000009073" description="Phosphoheptose isomerase">
    <location>
        <begin position="1"/>
        <end position="192"/>
    </location>
</feature>
<feature type="domain" description="SIS" evidence="1">
    <location>
        <begin position="35"/>
        <end position="192"/>
    </location>
</feature>
<feature type="binding site" evidence="1">
    <location>
        <begin position="50"/>
        <end position="52"/>
    </location>
    <ligand>
        <name>substrate</name>
    </ligand>
</feature>
<feature type="binding site" evidence="1">
    <location>
        <position position="59"/>
    </location>
    <ligand>
        <name>Zn(2+)</name>
        <dbReference type="ChEBI" id="CHEBI:29105"/>
    </ligand>
</feature>
<feature type="binding site" evidence="1">
    <location>
        <position position="63"/>
    </location>
    <ligand>
        <name>substrate</name>
    </ligand>
</feature>
<feature type="binding site" evidence="1">
    <location>
        <position position="63"/>
    </location>
    <ligand>
        <name>Zn(2+)</name>
        <dbReference type="ChEBI" id="CHEBI:29105"/>
    </ligand>
</feature>
<feature type="binding site" evidence="1">
    <location>
        <begin position="92"/>
        <end position="93"/>
    </location>
    <ligand>
        <name>substrate</name>
    </ligand>
</feature>
<feature type="binding site" evidence="1">
    <location>
        <begin position="118"/>
        <end position="120"/>
    </location>
    <ligand>
        <name>substrate</name>
    </ligand>
</feature>
<feature type="binding site" evidence="1">
    <location>
        <position position="123"/>
    </location>
    <ligand>
        <name>substrate</name>
    </ligand>
</feature>
<feature type="binding site" evidence="1">
    <location>
        <position position="170"/>
    </location>
    <ligand>
        <name>substrate</name>
    </ligand>
</feature>
<feature type="binding site" evidence="1">
    <location>
        <position position="170"/>
    </location>
    <ligand>
        <name>Zn(2+)</name>
        <dbReference type="ChEBI" id="CHEBI:29105"/>
    </ligand>
</feature>
<feature type="binding site" evidence="1">
    <location>
        <position position="178"/>
    </location>
    <ligand>
        <name>Zn(2+)</name>
        <dbReference type="ChEBI" id="CHEBI:29105"/>
    </ligand>
</feature>
<sequence length="192" mass="21079">MIDDLIQKEFLAHKEALEKSLESLQEALKQSVHLLIETLENQGKILICGNGGSASDAQHFATELTGRYKLERKGLSAISLNTDTSALTAIANDYGYEEVFARQVEALGVKNDVLIGISTSGNSKNVLKAYEKAKDLGMKTLSLAGRDGGKMKPLSDMALIVPSDDTPRIQEMHILMIHILCDCIERHFAHKN</sequence>
<proteinExistence type="inferred from homology"/>
<accession>Q1CT15</accession>
<keyword id="KW-0119">Carbohydrate metabolism</keyword>
<keyword id="KW-0963">Cytoplasm</keyword>
<keyword id="KW-0413">Isomerase</keyword>
<keyword id="KW-0479">Metal-binding</keyword>
<keyword id="KW-0862">Zinc</keyword>
<dbReference type="EC" id="5.3.1.28" evidence="1"/>
<dbReference type="EMBL" id="CP000241">
    <property type="protein sequence ID" value="ABF84907.1"/>
    <property type="molecule type" value="Genomic_DNA"/>
</dbReference>
<dbReference type="RefSeq" id="WP_000564555.1">
    <property type="nucleotide sequence ID" value="NC_008086.1"/>
</dbReference>
<dbReference type="SMR" id="Q1CT15"/>
<dbReference type="KEGG" id="hpa:HPAG1_0840"/>
<dbReference type="HOGENOM" id="CLU_080999_4_0_7"/>
<dbReference type="UniPathway" id="UPA00041">
    <property type="reaction ID" value="UER00436"/>
</dbReference>
<dbReference type="GO" id="GO:0005737">
    <property type="term" value="C:cytoplasm"/>
    <property type="evidence" value="ECO:0007669"/>
    <property type="project" value="UniProtKB-SubCell"/>
</dbReference>
<dbReference type="GO" id="GO:0097367">
    <property type="term" value="F:carbohydrate derivative binding"/>
    <property type="evidence" value="ECO:0007669"/>
    <property type="project" value="InterPro"/>
</dbReference>
<dbReference type="GO" id="GO:0008968">
    <property type="term" value="F:D-sedoheptulose 7-phosphate isomerase activity"/>
    <property type="evidence" value="ECO:0007669"/>
    <property type="project" value="UniProtKB-UniRule"/>
</dbReference>
<dbReference type="GO" id="GO:0008270">
    <property type="term" value="F:zinc ion binding"/>
    <property type="evidence" value="ECO:0007669"/>
    <property type="project" value="UniProtKB-UniRule"/>
</dbReference>
<dbReference type="GO" id="GO:0005975">
    <property type="term" value="P:carbohydrate metabolic process"/>
    <property type="evidence" value="ECO:0007669"/>
    <property type="project" value="UniProtKB-UniRule"/>
</dbReference>
<dbReference type="GO" id="GO:2001061">
    <property type="term" value="P:D-glycero-D-manno-heptose 7-phosphate biosynthetic process"/>
    <property type="evidence" value="ECO:0007669"/>
    <property type="project" value="UniProtKB-UniPathway"/>
</dbReference>
<dbReference type="CDD" id="cd05006">
    <property type="entry name" value="SIS_GmhA"/>
    <property type="match status" value="1"/>
</dbReference>
<dbReference type="Gene3D" id="3.40.50.10490">
    <property type="entry name" value="Glucose-6-phosphate isomerase like protein, domain 1"/>
    <property type="match status" value="1"/>
</dbReference>
<dbReference type="HAMAP" id="MF_00067">
    <property type="entry name" value="GmhA"/>
    <property type="match status" value="1"/>
</dbReference>
<dbReference type="InterPro" id="IPR035461">
    <property type="entry name" value="GmhA/DiaA"/>
</dbReference>
<dbReference type="InterPro" id="IPR004515">
    <property type="entry name" value="Phosphoheptose_Isoase"/>
</dbReference>
<dbReference type="InterPro" id="IPR001347">
    <property type="entry name" value="SIS_dom"/>
</dbReference>
<dbReference type="InterPro" id="IPR046348">
    <property type="entry name" value="SIS_dom_sf"/>
</dbReference>
<dbReference type="InterPro" id="IPR050099">
    <property type="entry name" value="SIS_GmhA/DiaA_subfam"/>
</dbReference>
<dbReference type="NCBIfam" id="TIGR00441">
    <property type="entry name" value="gmhA"/>
    <property type="match status" value="1"/>
</dbReference>
<dbReference type="PANTHER" id="PTHR30390:SF6">
    <property type="entry name" value="DNAA INITIATOR-ASSOCIATING PROTEIN DIAA"/>
    <property type="match status" value="1"/>
</dbReference>
<dbReference type="PANTHER" id="PTHR30390">
    <property type="entry name" value="SEDOHEPTULOSE 7-PHOSPHATE ISOMERASE / DNAA INITIATOR-ASSOCIATING FACTOR FOR REPLICATION INITIATION"/>
    <property type="match status" value="1"/>
</dbReference>
<dbReference type="Pfam" id="PF13580">
    <property type="entry name" value="SIS_2"/>
    <property type="match status" value="1"/>
</dbReference>
<dbReference type="SUPFAM" id="SSF53697">
    <property type="entry name" value="SIS domain"/>
    <property type="match status" value="1"/>
</dbReference>
<dbReference type="PROSITE" id="PS51464">
    <property type="entry name" value="SIS"/>
    <property type="match status" value="1"/>
</dbReference>
<comment type="function">
    <text evidence="1">Catalyzes the isomerization of sedoheptulose 7-phosphate in D-glycero-D-manno-heptose 7-phosphate.</text>
</comment>
<comment type="catalytic activity">
    <reaction evidence="1">
        <text>2 D-sedoheptulose 7-phosphate = D-glycero-alpha-D-manno-heptose 7-phosphate + D-glycero-beta-D-manno-heptose 7-phosphate</text>
        <dbReference type="Rhea" id="RHEA:27489"/>
        <dbReference type="ChEBI" id="CHEBI:57483"/>
        <dbReference type="ChEBI" id="CHEBI:60203"/>
        <dbReference type="ChEBI" id="CHEBI:60204"/>
        <dbReference type="EC" id="5.3.1.28"/>
    </reaction>
</comment>
<comment type="cofactor">
    <cofactor evidence="1">
        <name>Zn(2+)</name>
        <dbReference type="ChEBI" id="CHEBI:29105"/>
    </cofactor>
    <text evidence="1">Binds 1 zinc ion per subunit.</text>
</comment>
<comment type="pathway">
    <text evidence="1">Carbohydrate biosynthesis; D-glycero-D-manno-heptose 7-phosphate biosynthesis; D-glycero-alpha-D-manno-heptose 7-phosphate and D-glycero-beta-D-manno-heptose 7-phosphate from sedoheptulose 7-phosphate: step 1/1.</text>
</comment>
<comment type="subunit">
    <text evidence="1">Homotetramer.</text>
</comment>
<comment type="subcellular location">
    <subcellularLocation>
        <location evidence="1">Cytoplasm</location>
    </subcellularLocation>
</comment>
<comment type="miscellaneous">
    <text evidence="1">The reaction produces a racemic mixture of D-glycero-alpha-D-manno-heptose 7-phosphate and D-glycero-beta-D-manno-heptose 7-phosphate.</text>
</comment>
<comment type="similarity">
    <text evidence="1">Belongs to the SIS family. GmhA subfamily.</text>
</comment>
<gene>
    <name evidence="1" type="primary">gmhA</name>
    <name type="ordered locus">HPAG1_0840</name>
</gene>
<evidence type="ECO:0000255" key="1">
    <source>
        <dbReference type="HAMAP-Rule" id="MF_00067"/>
    </source>
</evidence>
<protein>
    <recommendedName>
        <fullName evidence="1">Phosphoheptose isomerase</fullName>
        <ecNumber evidence="1">5.3.1.28</ecNumber>
    </recommendedName>
    <alternativeName>
        <fullName evidence="1">Sedoheptulose 7-phosphate isomerase</fullName>
    </alternativeName>
</protein>
<reference key="1">
    <citation type="journal article" date="2006" name="Proc. Natl. Acad. Sci. U.S.A.">
        <title>The complete genome sequence of a chronic atrophic gastritis Helicobacter pylori strain: evolution during disease progression.</title>
        <authorList>
            <person name="Oh J.D."/>
            <person name="Kling-Baeckhed H."/>
            <person name="Giannakis M."/>
            <person name="Xu J."/>
            <person name="Fulton R.S."/>
            <person name="Fulton L.A."/>
            <person name="Cordum H.S."/>
            <person name="Wang C."/>
            <person name="Elliott G."/>
            <person name="Edwards J."/>
            <person name="Mardis E.R."/>
            <person name="Engstrand L.G."/>
            <person name="Gordon J.I."/>
        </authorList>
    </citation>
    <scope>NUCLEOTIDE SEQUENCE [LARGE SCALE GENOMIC DNA]</scope>
    <source>
        <strain>HPAG1</strain>
    </source>
</reference>
<organism>
    <name type="scientific">Helicobacter pylori (strain HPAG1)</name>
    <dbReference type="NCBI Taxonomy" id="357544"/>
    <lineage>
        <taxon>Bacteria</taxon>
        <taxon>Pseudomonadati</taxon>
        <taxon>Campylobacterota</taxon>
        <taxon>Epsilonproteobacteria</taxon>
        <taxon>Campylobacterales</taxon>
        <taxon>Helicobacteraceae</taxon>
        <taxon>Helicobacter</taxon>
    </lineage>
</organism>